<evidence type="ECO:0000250" key="1">
    <source>
        <dbReference type="UniProtKB" id="Q13507"/>
    </source>
</evidence>
<evidence type="ECO:0000255" key="2"/>
<evidence type="ECO:0000256" key="3">
    <source>
        <dbReference type="SAM" id="MobiDB-lite"/>
    </source>
</evidence>
<evidence type="ECO:0000269" key="4">
    <source>
    </source>
</evidence>
<evidence type="ECO:0000305" key="5"/>
<evidence type="ECO:0000312" key="6">
    <source>
        <dbReference type="Proteomes" id="UP000000589"/>
    </source>
</evidence>
<feature type="chain" id="PRO_0000215311" description="Short transient receptor potential channel 3">
    <location>
        <begin position="1"/>
        <end position="910"/>
    </location>
</feature>
<feature type="topological domain" description="Cytoplasmic" evidence="1">
    <location>
        <begin position="1"/>
        <end position="448"/>
    </location>
</feature>
<feature type="transmembrane region" description="Helical" evidence="1">
    <location>
        <begin position="449"/>
        <end position="466"/>
    </location>
</feature>
<feature type="topological domain" description="Extracellular" evidence="1">
    <location>
        <begin position="467"/>
        <end position="497"/>
    </location>
</feature>
<feature type="transmembrane region" description="Helical" evidence="1">
    <location>
        <begin position="498"/>
        <end position="516"/>
    </location>
</feature>
<feature type="topological domain" description="Cytoplasmic" evidence="1">
    <location>
        <begin position="517"/>
        <end position="529"/>
    </location>
</feature>
<feature type="transmembrane region" description="Helical" evidence="1">
    <location>
        <begin position="530"/>
        <end position="551"/>
    </location>
</feature>
<feature type="topological domain" description="Extracellular" evidence="1">
    <location>
        <begin position="552"/>
        <end position="595"/>
    </location>
</feature>
<feature type="transmembrane region" description="Helical" evidence="1">
    <location>
        <begin position="596"/>
        <end position="619"/>
    </location>
</feature>
<feature type="topological domain" description="Cytoplasmic" evidence="1">
    <location>
        <begin position="620"/>
        <end position="638"/>
    </location>
</feature>
<feature type="transmembrane region" description="Helical" evidence="1">
    <location>
        <begin position="639"/>
        <end position="662"/>
    </location>
</feature>
<feature type="topological domain" description="Extracellular" evidence="1">
    <location>
        <begin position="663"/>
        <end position="702"/>
    </location>
</feature>
<feature type="transmembrane region" description="Helical" evidence="1">
    <location>
        <begin position="703"/>
        <end position="728"/>
    </location>
</feature>
<feature type="topological domain" description="Cytoplasmic" evidence="1">
    <location>
        <begin position="729"/>
        <end position="910"/>
    </location>
</feature>
<feature type="repeat" description="ANK 1" evidence="2">
    <location>
        <begin position="100"/>
        <end position="129"/>
    </location>
</feature>
<feature type="repeat" description="ANK 2" evidence="2">
    <location>
        <begin position="135"/>
        <end position="164"/>
    </location>
</feature>
<feature type="repeat" description="ANK 3" evidence="2">
    <location>
        <begin position="166"/>
        <end position="192"/>
    </location>
</feature>
<feature type="repeat" description="ANK 4" evidence="2">
    <location>
        <begin position="221"/>
        <end position="250"/>
    </location>
</feature>
<feature type="repeat" description="ANK 5" evidence="2">
    <location>
        <begin position="623"/>
        <end position="652"/>
    </location>
</feature>
<feature type="region of interest" description="Disordered" evidence="3">
    <location>
        <begin position="1"/>
        <end position="93"/>
    </location>
</feature>
<feature type="compositionally biased region" description="Acidic residues" evidence="3">
    <location>
        <begin position="19"/>
        <end position="29"/>
    </location>
</feature>
<feature type="compositionally biased region" description="Pro residues" evidence="3">
    <location>
        <begin position="48"/>
        <end position="58"/>
    </location>
</feature>
<feature type="compositionally biased region" description="Low complexity" evidence="3">
    <location>
        <begin position="59"/>
        <end position="68"/>
    </location>
</feature>
<feature type="binding site" evidence="1">
    <location>
        <position position="147"/>
    </location>
    <ligand>
        <name>Ca(2+)</name>
        <dbReference type="ChEBI" id="CHEBI:29108"/>
        <label>1</label>
    </ligand>
</feature>
<feature type="binding site" evidence="1">
    <location>
        <position position="514"/>
    </location>
    <ligand>
        <name>Ca(2+)</name>
        <dbReference type="ChEBI" id="CHEBI:29108"/>
        <label>2</label>
    </ligand>
</feature>
<feature type="binding site" evidence="1">
    <location>
        <position position="517"/>
    </location>
    <ligand>
        <name>Ca(2+)</name>
        <dbReference type="ChEBI" id="CHEBI:29108"/>
        <label>2</label>
    </ligand>
</feature>
<feature type="binding site" evidence="1">
    <location>
        <position position="532"/>
    </location>
    <ligand>
        <name>Ca(2+)</name>
        <dbReference type="ChEBI" id="CHEBI:29108"/>
        <label>2</label>
    </ligand>
</feature>
<feature type="binding site" evidence="1">
    <location>
        <position position="860"/>
    </location>
    <ligand>
        <name>Ca(2+)</name>
        <dbReference type="ChEBI" id="CHEBI:29108"/>
        <label>3</label>
    </ligand>
</feature>
<feature type="binding site" evidence="1">
    <location>
        <position position="863"/>
    </location>
    <ligand>
        <name>Ca(2+)</name>
        <dbReference type="ChEBI" id="CHEBI:29108"/>
        <label>3</label>
    </ligand>
</feature>
<feature type="binding site" evidence="1">
    <location>
        <position position="865"/>
    </location>
    <ligand>
        <name>Ca(2+)</name>
        <dbReference type="ChEBI" id="CHEBI:29108"/>
        <label>3</label>
    </ligand>
</feature>
<feature type="binding site" evidence="1">
    <location>
        <position position="872"/>
    </location>
    <ligand>
        <name>Ca(2+)</name>
        <dbReference type="ChEBI" id="CHEBI:29108"/>
        <label>1</label>
    </ligand>
</feature>
<feature type="glycosylation site" description="N-linked (GlcNAc...) asparagine" evidence="2">
    <location>
        <position position="478"/>
    </location>
</feature>
<feature type="sequence conflict" description="In Ref. 2; AAF01468." evidence="5" ref="2">
    <original>P</original>
    <variation>A</variation>
    <location>
        <position position="251"/>
    </location>
</feature>
<keyword id="KW-0040">ANK repeat</keyword>
<keyword id="KW-0106">Calcium</keyword>
<keyword id="KW-0107">Calcium channel</keyword>
<keyword id="KW-0109">Calcium transport</keyword>
<keyword id="KW-1003">Cell membrane</keyword>
<keyword id="KW-0325">Glycoprotein</keyword>
<keyword id="KW-0407">Ion channel</keyword>
<keyword id="KW-0406">Ion transport</keyword>
<keyword id="KW-0472">Membrane</keyword>
<keyword id="KW-0479">Metal-binding</keyword>
<keyword id="KW-1185">Reference proteome</keyword>
<keyword id="KW-0677">Repeat</keyword>
<keyword id="KW-0812">Transmembrane</keyword>
<keyword id="KW-1133">Transmembrane helix</keyword>
<keyword id="KW-0813">Transport</keyword>
<protein>
    <recommendedName>
        <fullName>Short transient receptor potential channel 3</fullName>
        <shortName>TrpC3</shortName>
    </recommendedName>
    <alternativeName>
        <fullName>Receptor-activated cation channel TRP3</fullName>
    </alternativeName>
    <alternativeName>
        <fullName>Transient receptor protein 3</fullName>
        <shortName>TRP-3</shortName>
        <shortName>mTrp3</shortName>
    </alternativeName>
    <alternativeName>
        <fullName>Trp-related protein 3</fullName>
    </alternativeName>
</protein>
<dbReference type="EMBL" id="AL663106">
    <property type="protein sequence ID" value="CAM28054.1"/>
    <property type="molecule type" value="Genomic_DNA"/>
</dbReference>
<dbReference type="EMBL" id="AF190645">
    <property type="protein sequence ID" value="AAF01468.1"/>
    <property type="molecule type" value="mRNA"/>
</dbReference>
<dbReference type="EMBL" id="U40982">
    <property type="protein sequence ID" value="AAC52701.1"/>
    <property type="molecule type" value="mRNA"/>
</dbReference>
<dbReference type="CCDS" id="CCDS50893.1"/>
<dbReference type="RefSeq" id="NP_062383.2">
    <property type="nucleotide sequence ID" value="NM_019510.3"/>
</dbReference>
<dbReference type="SMR" id="Q9QZC1"/>
<dbReference type="DIP" id="DIP-61309N"/>
<dbReference type="FunCoup" id="Q9QZC1">
    <property type="interactions" value="68"/>
</dbReference>
<dbReference type="IntAct" id="Q9QZC1">
    <property type="interactions" value="4"/>
</dbReference>
<dbReference type="STRING" id="10090.ENSMUSP00000029271"/>
<dbReference type="BindingDB" id="Q9QZC1"/>
<dbReference type="ChEMBL" id="CHEMBL4739706"/>
<dbReference type="GlyCosmos" id="Q9QZC1">
    <property type="glycosylation" value="2 sites, No reported glycans"/>
</dbReference>
<dbReference type="GlyGen" id="Q9QZC1">
    <property type="glycosylation" value="1 site"/>
</dbReference>
<dbReference type="iPTMnet" id="Q9QZC1"/>
<dbReference type="PhosphoSitePlus" id="Q9QZC1"/>
<dbReference type="PaxDb" id="10090-ENSMUSP00000029271"/>
<dbReference type="ProteomicsDB" id="297521"/>
<dbReference type="ProteomicsDB" id="332728"/>
<dbReference type="Antibodypedia" id="15891">
    <property type="antibodies" value="282 antibodies from 34 providers"/>
</dbReference>
<dbReference type="DNASU" id="22065"/>
<dbReference type="Ensembl" id="ENSMUST00000029271.5">
    <property type="protein sequence ID" value="ENSMUSP00000029271.5"/>
    <property type="gene ID" value="ENSMUSG00000027716.14"/>
</dbReference>
<dbReference type="GeneID" id="22065"/>
<dbReference type="KEGG" id="mmu:22065"/>
<dbReference type="AGR" id="MGI:109526"/>
<dbReference type="CTD" id="7222"/>
<dbReference type="MGI" id="MGI:109526">
    <property type="gene designation" value="Trpc3"/>
</dbReference>
<dbReference type="VEuPathDB" id="HostDB:ENSMUSG00000027716"/>
<dbReference type="eggNOG" id="KOG3609">
    <property type="taxonomic scope" value="Eukaryota"/>
</dbReference>
<dbReference type="GeneTree" id="ENSGT01060000248588"/>
<dbReference type="HOGENOM" id="CLU_005716_4_2_1"/>
<dbReference type="InParanoid" id="Q9QZC1"/>
<dbReference type="OMA" id="REAHSYC"/>
<dbReference type="OrthoDB" id="2373987at2759"/>
<dbReference type="TreeFam" id="TF313147"/>
<dbReference type="Reactome" id="R-MMU-114508">
    <property type="pathway name" value="Effects of PIP2 hydrolysis"/>
</dbReference>
<dbReference type="Reactome" id="R-MMU-139853">
    <property type="pathway name" value="Elevation of cytosolic Ca2+ levels"/>
</dbReference>
<dbReference type="Reactome" id="R-MMU-3295583">
    <property type="pathway name" value="TRP channels"/>
</dbReference>
<dbReference type="BioGRID-ORCS" id="22065">
    <property type="hits" value="2 hits in 75 CRISPR screens"/>
</dbReference>
<dbReference type="ChiTaRS" id="Trpc3">
    <property type="organism name" value="mouse"/>
</dbReference>
<dbReference type="PRO" id="PR:Q9QZC1"/>
<dbReference type="Proteomes" id="UP000000589">
    <property type="component" value="Chromosome 3"/>
</dbReference>
<dbReference type="RNAct" id="Q9QZC1">
    <property type="molecule type" value="protein"/>
</dbReference>
<dbReference type="Bgee" id="ENSMUSG00000027716">
    <property type="expression patterns" value="Expressed in cerebellum lobe and 134 other cell types or tissues"/>
</dbReference>
<dbReference type="GO" id="GO:0005886">
    <property type="term" value="C:plasma membrane"/>
    <property type="evidence" value="ECO:0000304"/>
    <property type="project" value="Reactome"/>
</dbReference>
<dbReference type="GO" id="GO:0005227">
    <property type="term" value="F:calcium-activated cation channel activity"/>
    <property type="evidence" value="ECO:0007669"/>
    <property type="project" value="Ensembl"/>
</dbReference>
<dbReference type="GO" id="GO:0070679">
    <property type="term" value="F:inositol 1,4,5 trisphosphate binding"/>
    <property type="evidence" value="ECO:0007669"/>
    <property type="project" value="Ensembl"/>
</dbReference>
<dbReference type="GO" id="GO:0046872">
    <property type="term" value="F:metal ion binding"/>
    <property type="evidence" value="ECO:0007669"/>
    <property type="project" value="UniProtKB-KW"/>
</dbReference>
<dbReference type="GO" id="GO:0015279">
    <property type="term" value="F:store-operated calcium channel activity"/>
    <property type="evidence" value="ECO:0000250"/>
    <property type="project" value="UniProtKB"/>
</dbReference>
<dbReference type="GO" id="GO:0010524">
    <property type="term" value="P:positive regulation of calcium ion transport into cytosol"/>
    <property type="evidence" value="ECO:0007669"/>
    <property type="project" value="Ensembl"/>
</dbReference>
<dbReference type="GO" id="GO:1903244">
    <property type="term" value="P:positive regulation of cardiac muscle hypertrophy in response to stress"/>
    <property type="evidence" value="ECO:0007669"/>
    <property type="project" value="Ensembl"/>
</dbReference>
<dbReference type="GO" id="GO:0033198">
    <property type="term" value="P:response to ATP"/>
    <property type="evidence" value="ECO:0007669"/>
    <property type="project" value="Ensembl"/>
</dbReference>
<dbReference type="GO" id="GO:0051592">
    <property type="term" value="P:response to calcium ion"/>
    <property type="evidence" value="ECO:0007669"/>
    <property type="project" value="Ensembl"/>
</dbReference>
<dbReference type="FunFam" id="1.25.40.20:FF:000157">
    <property type="entry name" value="short transient receptor potential channel 6 isoform X1"/>
    <property type="match status" value="1"/>
</dbReference>
<dbReference type="FunFam" id="1.10.287.70:FF:000041">
    <property type="entry name" value="Transient receptor potential cation channel subfamily C member 7"/>
    <property type="match status" value="1"/>
</dbReference>
<dbReference type="Gene3D" id="1.25.40.20">
    <property type="entry name" value="Ankyrin repeat-containing domain"/>
    <property type="match status" value="1"/>
</dbReference>
<dbReference type="InterPro" id="IPR002110">
    <property type="entry name" value="Ankyrin_rpt"/>
</dbReference>
<dbReference type="InterPro" id="IPR036770">
    <property type="entry name" value="Ankyrin_rpt-contain_sf"/>
</dbReference>
<dbReference type="InterPro" id="IPR005821">
    <property type="entry name" value="Ion_trans_dom"/>
</dbReference>
<dbReference type="InterPro" id="IPR013555">
    <property type="entry name" value="TRP_dom"/>
</dbReference>
<dbReference type="InterPro" id="IPR005459">
    <property type="entry name" value="TRPC3_channel"/>
</dbReference>
<dbReference type="InterPro" id="IPR002153">
    <property type="entry name" value="TRPC_channel"/>
</dbReference>
<dbReference type="NCBIfam" id="TIGR00870">
    <property type="entry name" value="trp"/>
    <property type="match status" value="1"/>
</dbReference>
<dbReference type="PANTHER" id="PTHR10117:SF8">
    <property type="entry name" value="SHORT TRANSIENT RECEPTOR POTENTIAL CHANNEL 3"/>
    <property type="match status" value="1"/>
</dbReference>
<dbReference type="PANTHER" id="PTHR10117">
    <property type="entry name" value="TRANSIENT RECEPTOR POTENTIAL CHANNEL"/>
    <property type="match status" value="1"/>
</dbReference>
<dbReference type="Pfam" id="PF12796">
    <property type="entry name" value="Ank_2"/>
    <property type="match status" value="1"/>
</dbReference>
<dbReference type="Pfam" id="PF00520">
    <property type="entry name" value="Ion_trans"/>
    <property type="match status" value="1"/>
</dbReference>
<dbReference type="Pfam" id="PF08344">
    <property type="entry name" value="TRP_2"/>
    <property type="match status" value="1"/>
</dbReference>
<dbReference type="PRINTS" id="PR01097">
    <property type="entry name" value="TRNSRECEPTRP"/>
</dbReference>
<dbReference type="PRINTS" id="PR01644">
    <property type="entry name" value="TRPCHANNEL3"/>
</dbReference>
<dbReference type="SMART" id="SM00248">
    <property type="entry name" value="ANK"/>
    <property type="match status" value="3"/>
</dbReference>
<dbReference type="SMART" id="SM01420">
    <property type="entry name" value="TRP_2"/>
    <property type="match status" value="1"/>
</dbReference>
<dbReference type="SUPFAM" id="SSF48403">
    <property type="entry name" value="Ankyrin repeat"/>
    <property type="match status" value="1"/>
</dbReference>
<dbReference type="PROSITE" id="PS50297">
    <property type="entry name" value="ANK_REP_REGION"/>
    <property type="match status" value="1"/>
</dbReference>
<comment type="function">
    <text evidence="1">Forms a receptor-activated non-selective calcium permeant cation channel. May be operated by a phosphatidylinositol second messenger system activated by receptor tyrosine kinases or G-protein coupled receptors.</text>
</comment>
<comment type="catalytic activity">
    <reaction evidence="1">
        <text>Ca(2+)(in) = Ca(2+)(out)</text>
        <dbReference type="Rhea" id="RHEA:29671"/>
        <dbReference type="ChEBI" id="CHEBI:29108"/>
    </reaction>
</comment>
<comment type="activity regulation">
    <text evidence="1">Activated by diacylglycerol (DAG) in a membrane-delimited fashion, independently of protein kinase C. Activated by inositol 1,4,5-triphosphate receptors (ITPR) with bound IP3. May be activated by internal calcium store depletion. Inhibited by intracellular Ca(2+).</text>
</comment>
<comment type="subunit">
    <text evidence="1">Homotetramer. Interacts with ITPR1, ITPR3, MX1 and RNF24. Interacts with JPH2; the interaction is involved in maintaining Ca(2+) homeostasis in skeletal muscle and is mediated by JPH2 'Ser-165' phosphorylation.</text>
</comment>
<comment type="interaction">
    <interactant intactId="EBI-10051366">
        <id>Q9QZC1</id>
    </interactant>
    <interactant intactId="EBI-7813714">
        <id>Q13563</id>
        <label>PKD2</label>
    </interactant>
    <organismsDiffer>true</organismsDiffer>
    <experiments>3</experiments>
</comment>
<comment type="subcellular location">
    <subcellularLocation>
        <location evidence="1">Cell membrane</location>
        <topology evidence="2">Multi-pass membrane protein</topology>
    </subcellularLocation>
</comment>
<comment type="tissue specificity">
    <text evidence="4">Abundantly expressed in brain. Concentrated in cerebellar Purkinje cells and sparsely localized in cerebellar granule lyer, pontine nuclei and thalamus. Lower levels detected in other tissues.</text>
</comment>
<comment type="domain">
    <text evidence="1">The cytoplasmic portion of the protein is required for channel assembly and gating.</text>
</comment>
<comment type="similarity">
    <text evidence="5">Belongs to the transient receptor (TC 1.A.4) family. STrpC subfamily. TRPC3 sub-subfamily.</text>
</comment>
<reference evidence="6" key="1">
    <citation type="journal article" date="2009" name="PLoS Biol.">
        <title>Lineage-specific biology revealed by a finished genome assembly of the mouse.</title>
        <authorList>
            <person name="Church D.M."/>
            <person name="Goodstadt L."/>
            <person name="Hillier L.W."/>
            <person name="Zody M.C."/>
            <person name="Goldstein S."/>
            <person name="She X."/>
            <person name="Bult C.J."/>
            <person name="Agarwala R."/>
            <person name="Cherry J.L."/>
            <person name="DiCuccio M."/>
            <person name="Hlavina W."/>
            <person name="Kapustin Y."/>
            <person name="Meric P."/>
            <person name="Maglott D."/>
            <person name="Birtle Z."/>
            <person name="Marques A.C."/>
            <person name="Graves T."/>
            <person name="Zhou S."/>
            <person name="Teague B."/>
            <person name="Potamousis K."/>
            <person name="Churas C."/>
            <person name="Place M."/>
            <person name="Herschleb J."/>
            <person name="Runnheim R."/>
            <person name="Forrest D."/>
            <person name="Amos-Landgraf J."/>
            <person name="Schwartz D.C."/>
            <person name="Cheng Z."/>
            <person name="Lindblad-Toh K."/>
            <person name="Eichler E.E."/>
            <person name="Ponting C.P."/>
        </authorList>
    </citation>
    <scope>NUCLEOTIDE SEQUENCE [LARGE SCALE GENOMIC DNA]</scope>
    <source>
        <strain evidence="6">C57BL/6J</strain>
    </source>
</reference>
<reference key="2">
    <citation type="journal article" date="1998" name="NeuroReport">
        <title>Differential distribution of TRP Ca2+ channel isoforms in mouse brain.</title>
        <authorList>
            <person name="Mori Y."/>
            <person name="Takada N."/>
            <person name="Okada T."/>
            <person name="Wakamori M."/>
            <person name="Imoto K."/>
            <person name="Wanifuchi H."/>
            <person name="Oka H."/>
            <person name="Oba A."/>
            <person name="Ikenaka K."/>
            <person name="Kurosaki T."/>
        </authorList>
    </citation>
    <scope>NUCLEOTIDE SEQUENCE [MRNA] OF 75-910</scope>
    <scope>TISSUE SPECIFICITY</scope>
    <source>
        <tissue>Brain</tissue>
    </source>
</reference>
<reference key="3">
    <citation type="journal article" date="1996" name="Cell">
        <title>trp, a novel mammalian gene family essential for agonist-activated capacitative Ca2+ entry.</title>
        <authorList>
            <person name="Zhu X."/>
            <person name="Jiang M."/>
            <person name="Peyton M."/>
            <person name="Boulay G."/>
            <person name="Hurst R."/>
            <person name="Stefani E."/>
            <person name="Birnbaumer L."/>
        </authorList>
    </citation>
    <scope>NUCLEOTIDE SEQUENCE [MRNA] OF 637-745</scope>
</reference>
<proteinExistence type="evidence at protein level"/>
<gene>
    <name type="primary">Trpc3</name>
    <name type="synonym">Trp3</name>
    <name type="synonym">Trrp3</name>
</gene>
<name>TRPC3_MOUSE</name>
<accession>Q9QZC1</accession>
<accession>B1ATV3</accession>
<accession>Q61058</accession>
<sequence>MSTKVKKCREPARVTLPAPEEEEDGEAEGGESQRRRRGWRGVNGGLEPPCPRAPPSPGPDASSEGSPSRWRTAGMRDKGRRQAVRGPAFMFGARGPSLTAEEERFLDAAEYGNIPVVRKMLEESRTLNVNCVDYMGQNALQLAVGNEHLEVTELLLKKENLARIGDALLLAISKGYVRIVEAILGHPGFAASRRLTLSPCEQELRDDDFYAYDEDGTRFSPDITPIILAAHCHKYEVVHLLLLKGARIERPHDYFCRCSDCAEKQRLDAFSHSRSRINAYKGLASPAYLSLSSEDPVLTALELSNELAKLANIEKEFKNDYRKLSMQCKDFVVGVLDLCRDSEEVEAILNGDLESAEPLERHGHKASLSRVKLAIKYEVKKFVAHPNCQQQLLTIWYENLSGLREQTIAIKCLVVLVVALGLPFLAIGYWIAPCSRLGKILRSPFMKFVAHAASFIIFLGLLVFNASDRFEGITTLPNITVIDYPKQIFRVKTTQFTWTEMLIMVWVLGMMWSECKELWLEGPREYIVQLWNVLDFGMLSIFIAAFTARFLAFLQATKAQQYVDSHVQESDLSEVTLPPEVQYFTYARDKWLPSDPQIISEGLYAIAVVLSFSRIAYILPANESFGPLQISLGRTVKDIFKFMVLFIMVFLAFMIGMFILYSYYLGAKVNPAFTTVEESFKTLFWSIFGLSEVTSVVLKYDHKFIENIGYVLYGIYNVTMVVVLLNMLIAMINSSYQEIEDDSDVEWKFARSKLWLSYFDDGKTLPPPFSLVPSPKSFVYFIMRITNFSKCRRRRLQKDLELGMGNSKSRLNLFTQSNSRVFESHSFNSILNQPTRYQQIMKRLIKRYVLKAQVDKENDEVNEGELKEIKQDISSLRYELLEDKSQATEELAILIHKLSEKLNPSVLRCE</sequence>
<organism>
    <name type="scientific">Mus musculus</name>
    <name type="common">Mouse</name>
    <dbReference type="NCBI Taxonomy" id="10090"/>
    <lineage>
        <taxon>Eukaryota</taxon>
        <taxon>Metazoa</taxon>
        <taxon>Chordata</taxon>
        <taxon>Craniata</taxon>
        <taxon>Vertebrata</taxon>
        <taxon>Euteleostomi</taxon>
        <taxon>Mammalia</taxon>
        <taxon>Eutheria</taxon>
        <taxon>Euarchontoglires</taxon>
        <taxon>Glires</taxon>
        <taxon>Rodentia</taxon>
        <taxon>Myomorpha</taxon>
        <taxon>Muroidea</taxon>
        <taxon>Muridae</taxon>
        <taxon>Murinae</taxon>
        <taxon>Mus</taxon>
        <taxon>Mus</taxon>
    </lineage>
</organism>